<protein>
    <recommendedName>
        <fullName evidence="1">Small ribosomal subunit protein uS2</fullName>
    </recommendedName>
    <alternativeName>
        <fullName evidence="3">30S ribosomal protein S2</fullName>
    </alternativeName>
</protein>
<sequence>MSNSPTNMPMRDLLQAGAHFGHQTRFWNPKMNQYIFGARNKIHIINLEHTVKAFNEALTYVNGLAAKNNKVLFVGTKRAASGVIREQALRAGQPYVDHRWLGGMLTNWKTLRQSINRLKELEKQAEDGTFAKLTKREALERTRAMEKLERSLGGIKNMGGLPDAIFVVDVDHEAIAIKEAKNLGIPVIGIVDTNSNPDNVDYIIPANDDAIRAVTLYVTRMADAIIAGKEYAKTQAGGAAEAPAAEDVQTEEAAAPEADSAE</sequence>
<accession>A5WCX2</accession>
<comment type="similarity">
    <text evidence="1">Belongs to the universal ribosomal protein uS2 family.</text>
</comment>
<comment type="sequence caution" evidence="3">
    <conflict type="erroneous initiation">
        <sequence resource="EMBL-CDS" id="ABQ93513"/>
    </conflict>
</comment>
<organism>
    <name type="scientific">Psychrobacter sp. (strain PRwf-1)</name>
    <dbReference type="NCBI Taxonomy" id="349106"/>
    <lineage>
        <taxon>Bacteria</taxon>
        <taxon>Pseudomonadati</taxon>
        <taxon>Pseudomonadota</taxon>
        <taxon>Gammaproteobacteria</taxon>
        <taxon>Moraxellales</taxon>
        <taxon>Moraxellaceae</taxon>
        <taxon>Psychrobacter</taxon>
    </lineage>
</organism>
<evidence type="ECO:0000255" key="1">
    <source>
        <dbReference type="HAMAP-Rule" id="MF_00291"/>
    </source>
</evidence>
<evidence type="ECO:0000256" key="2">
    <source>
        <dbReference type="SAM" id="MobiDB-lite"/>
    </source>
</evidence>
<evidence type="ECO:0000305" key="3"/>
<gene>
    <name evidence="1" type="primary">rpsB</name>
    <name type="ordered locus">PsycPRwf_0558</name>
</gene>
<feature type="chain" id="PRO_0000352027" description="Small ribosomal subunit protein uS2">
    <location>
        <begin position="1"/>
        <end position="262"/>
    </location>
</feature>
<feature type="region of interest" description="Disordered" evidence="2">
    <location>
        <begin position="236"/>
        <end position="262"/>
    </location>
</feature>
<dbReference type="EMBL" id="CP000713">
    <property type="protein sequence ID" value="ABQ93513.1"/>
    <property type="status" value="ALT_INIT"/>
    <property type="molecule type" value="Genomic_DNA"/>
</dbReference>
<dbReference type="SMR" id="A5WCX2"/>
<dbReference type="STRING" id="349106.PsycPRwf_0558"/>
<dbReference type="KEGG" id="prw:PsycPRwf_0558"/>
<dbReference type="eggNOG" id="COG0052">
    <property type="taxonomic scope" value="Bacteria"/>
</dbReference>
<dbReference type="HOGENOM" id="CLU_040318_1_2_6"/>
<dbReference type="GO" id="GO:0022627">
    <property type="term" value="C:cytosolic small ribosomal subunit"/>
    <property type="evidence" value="ECO:0007669"/>
    <property type="project" value="TreeGrafter"/>
</dbReference>
<dbReference type="GO" id="GO:0003735">
    <property type="term" value="F:structural constituent of ribosome"/>
    <property type="evidence" value="ECO:0007669"/>
    <property type="project" value="InterPro"/>
</dbReference>
<dbReference type="GO" id="GO:0006412">
    <property type="term" value="P:translation"/>
    <property type="evidence" value="ECO:0007669"/>
    <property type="project" value="UniProtKB-UniRule"/>
</dbReference>
<dbReference type="CDD" id="cd01425">
    <property type="entry name" value="RPS2"/>
    <property type="match status" value="1"/>
</dbReference>
<dbReference type="FunFam" id="1.10.287.610:FF:000001">
    <property type="entry name" value="30S ribosomal protein S2"/>
    <property type="match status" value="1"/>
</dbReference>
<dbReference type="Gene3D" id="3.40.50.10490">
    <property type="entry name" value="Glucose-6-phosphate isomerase like protein, domain 1"/>
    <property type="match status" value="1"/>
</dbReference>
<dbReference type="Gene3D" id="1.10.287.610">
    <property type="entry name" value="Helix hairpin bin"/>
    <property type="match status" value="1"/>
</dbReference>
<dbReference type="HAMAP" id="MF_00291_B">
    <property type="entry name" value="Ribosomal_uS2_B"/>
    <property type="match status" value="1"/>
</dbReference>
<dbReference type="InterPro" id="IPR001865">
    <property type="entry name" value="Ribosomal_uS2"/>
</dbReference>
<dbReference type="InterPro" id="IPR005706">
    <property type="entry name" value="Ribosomal_uS2_bac/mit/plastid"/>
</dbReference>
<dbReference type="InterPro" id="IPR018130">
    <property type="entry name" value="Ribosomal_uS2_CS"/>
</dbReference>
<dbReference type="InterPro" id="IPR023591">
    <property type="entry name" value="Ribosomal_uS2_flav_dom_sf"/>
</dbReference>
<dbReference type="NCBIfam" id="TIGR01011">
    <property type="entry name" value="rpsB_bact"/>
    <property type="match status" value="1"/>
</dbReference>
<dbReference type="PANTHER" id="PTHR12534">
    <property type="entry name" value="30S RIBOSOMAL PROTEIN S2 PROKARYOTIC AND ORGANELLAR"/>
    <property type="match status" value="1"/>
</dbReference>
<dbReference type="PANTHER" id="PTHR12534:SF0">
    <property type="entry name" value="SMALL RIBOSOMAL SUBUNIT PROTEIN US2M"/>
    <property type="match status" value="1"/>
</dbReference>
<dbReference type="Pfam" id="PF00318">
    <property type="entry name" value="Ribosomal_S2"/>
    <property type="match status" value="1"/>
</dbReference>
<dbReference type="PRINTS" id="PR00395">
    <property type="entry name" value="RIBOSOMALS2"/>
</dbReference>
<dbReference type="SUPFAM" id="SSF52313">
    <property type="entry name" value="Ribosomal protein S2"/>
    <property type="match status" value="1"/>
</dbReference>
<dbReference type="PROSITE" id="PS00962">
    <property type="entry name" value="RIBOSOMAL_S2_1"/>
    <property type="match status" value="1"/>
</dbReference>
<dbReference type="PROSITE" id="PS00963">
    <property type="entry name" value="RIBOSOMAL_S2_2"/>
    <property type="match status" value="1"/>
</dbReference>
<keyword id="KW-0687">Ribonucleoprotein</keyword>
<keyword id="KW-0689">Ribosomal protein</keyword>
<proteinExistence type="inferred from homology"/>
<name>RS2_PSYWF</name>
<reference key="1">
    <citation type="submission" date="2007-05" db="EMBL/GenBank/DDBJ databases">
        <title>Complete sequence of chromosome of Psychrobacter sp. PRwf-1.</title>
        <authorList>
            <consortium name="US DOE Joint Genome Institute"/>
            <person name="Copeland A."/>
            <person name="Lucas S."/>
            <person name="Lapidus A."/>
            <person name="Barry K."/>
            <person name="Detter J.C."/>
            <person name="Glavina del Rio T."/>
            <person name="Hammon N."/>
            <person name="Israni S."/>
            <person name="Dalin E."/>
            <person name="Tice H."/>
            <person name="Pitluck S."/>
            <person name="Chain P."/>
            <person name="Malfatti S."/>
            <person name="Shin M."/>
            <person name="Vergez L."/>
            <person name="Schmutz J."/>
            <person name="Larimer F."/>
            <person name="Land M."/>
            <person name="Hauser L."/>
            <person name="Kyrpides N."/>
            <person name="Kim E."/>
            <person name="Tiedje J."/>
            <person name="Richardson P."/>
        </authorList>
    </citation>
    <scope>NUCLEOTIDE SEQUENCE [LARGE SCALE GENOMIC DNA]</scope>
    <source>
        <strain>PRwf-1</strain>
    </source>
</reference>